<evidence type="ECO:0000250" key="1">
    <source>
        <dbReference type="UniProtKB" id="Q8EG04"/>
    </source>
</evidence>
<evidence type="ECO:0000269" key="2">
    <source>
    </source>
</evidence>
<evidence type="ECO:0000305" key="3"/>
<reference key="1">
    <citation type="journal article" date="1996" name="DNA Res.">
        <title>A 570-kb DNA sequence of the Escherichia coli K-12 genome corresponding to the 28.0-40.1 min region on the linkage map.</title>
        <authorList>
            <person name="Aiba H."/>
            <person name="Baba T."/>
            <person name="Fujita K."/>
            <person name="Hayashi K."/>
            <person name="Inada T."/>
            <person name="Isono K."/>
            <person name="Itoh T."/>
            <person name="Kasai H."/>
            <person name="Kashimoto K."/>
            <person name="Kimura S."/>
            <person name="Kitakawa M."/>
            <person name="Kitagawa M."/>
            <person name="Makino K."/>
            <person name="Miki T."/>
            <person name="Mizobuchi K."/>
            <person name="Mori H."/>
            <person name="Mori T."/>
            <person name="Motomura K."/>
            <person name="Nakade S."/>
            <person name="Nakamura Y."/>
            <person name="Nashimoto H."/>
            <person name="Nishio Y."/>
            <person name="Oshima T."/>
            <person name="Saito N."/>
            <person name="Sampei G."/>
            <person name="Seki Y."/>
            <person name="Sivasundaram S."/>
            <person name="Tagami H."/>
            <person name="Takeda J."/>
            <person name="Takemoto K."/>
            <person name="Takeuchi Y."/>
            <person name="Wada C."/>
            <person name="Yamamoto Y."/>
            <person name="Horiuchi T."/>
        </authorList>
    </citation>
    <scope>NUCLEOTIDE SEQUENCE [LARGE SCALE GENOMIC DNA]</scope>
    <source>
        <strain>K12 / W3110 / ATCC 27325 / DSM 5911</strain>
    </source>
</reference>
<reference key="2">
    <citation type="journal article" date="1997" name="Science">
        <title>The complete genome sequence of Escherichia coli K-12.</title>
        <authorList>
            <person name="Blattner F.R."/>
            <person name="Plunkett G. III"/>
            <person name="Bloch C.A."/>
            <person name="Perna N.T."/>
            <person name="Burland V."/>
            <person name="Riley M."/>
            <person name="Collado-Vides J."/>
            <person name="Glasner J.D."/>
            <person name="Rode C.K."/>
            <person name="Mayhew G.F."/>
            <person name="Gregor J."/>
            <person name="Davis N.W."/>
            <person name="Kirkpatrick H.A."/>
            <person name="Goeden M.A."/>
            <person name="Rose D.J."/>
            <person name="Mau B."/>
            <person name="Shao Y."/>
        </authorList>
    </citation>
    <scope>NUCLEOTIDE SEQUENCE [LARGE SCALE GENOMIC DNA]</scope>
    <source>
        <strain>K12 / MG1655 / ATCC 47076</strain>
    </source>
</reference>
<reference key="3">
    <citation type="journal article" date="2006" name="Mol. Syst. Biol.">
        <title>Highly accurate genome sequences of Escherichia coli K-12 strains MG1655 and W3110.</title>
        <authorList>
            <person name="Hayashi K."/>
            <person name="Morooka N."/>
            <person name="Yamamoto Y."/>
            <person name="Fujita K."/>
            <person name="Isono K."/>
            <person name="Choi S."/>
            <person name="Ohtsubo E."/>
            <person name="Baba T."/>
            <person name="Wanner B.L."/>
            <person name="Mori H."/>
            <person name="Horiuchi T."/>
        </authorList>
    </citation>
    <scope>NUCLEOTIDE SEQUENCE [LARGE SCALE GENOMIC DNA]</scope>
    <scope>SEQUENCE REVISION</scope>
    <source>
        <strain>K12 / W3110 / ATCC 27325 / DSM 5911</strain>
    </source>
</reference>
<reference key="4">
    <citation type="journal article" date="2009" name="Mol. Cell. Proteomics">
        <title>Lysine acetylation is a highly abundant and evolutionarily conserved modification in Escherichia coli.</title>
        <authorList>
            <person name="Zhang J."/>
            <person name="Sprung R."/>
            <person name="Pei J."/>
            <person name="Tan X."/>
            <person name="Kim S."/>
            <person name="Zhu H."/>
            <person name="Liu C.F."/>
            <person name="Grishin N.V."/>
            <person name="Zhao Y."/>
        </authorList>
    </citation>
    <scope>ACETYLATION [LARGE SCALE ANALYSIS] AT LYS-249</scope>
    <scope>IDENTIFICATION BY MASS SPECTROMETRY</scope>
    <source>
        <strain>K12 / JW1106</strain>
        <strain>K12 / MG1655 / ATCC 47076</strain>
    </source>
</reference>
<proteinExistence type="evidence at protein level"/>
<keyword id="KW-0007">Acetylation</keyword>
<keyword id="KW-0342">GTP-binding</keyword>
<keyword id="KW-0378">Hydrolase</keyword>
<keyword id="KW-0547">Nucleotide-binding</keyword>
<keyword id="KW-1185">Reference proteome</keyword>
<feature type="chain" id="PRO_0000168896" description="Ras-like GTPase YcjX">
    <location>
        <begin position="1"/>
        <end position="465"/>
    </location>
</feature>
<feature type="short sequence motif" description="Walker A motif" evidence="1">
    <location>
        <begin position="26"/>
        <end position="33"/>
    </location>
</feature>
<feature type="binding site" evidence="1">
    <location>
        <position position="28"/>
    </location>
    <ligand>
        <name>GTP</name>
        <dbReference type="ChEBI" id="CHEBI:37565"/>
    </ligand>
</feature>
<feature type="binding site" evidence="1">
    <location>
        <position position="31"/>
    </location>
    <ligand>
        <name>GDP</name>
        <dbReference type="ChEBI" id="CHEBI:58189"/>
    </ligand>
</feature>
<feature type="binding site" evidence="1">
    <location>
        <position position="31"/>
    </location>
    <ligand>
        <name>GTP</name>
        <dbReference type="ChEBI" id="CHEBI:37565"/>
    </ligand>
</feature>
<feature type="binding site" evidence="1">
    <location>
        <position position="32"/>
    </location>
    <ligand>
        <name>GDP</name>
        <dbReference type="ChEBI" id="CHEBI:58189"/>
    </ligand>
</feature>
<feature type="binding site" evidence="1">
    <location>
        <position position="32"/>
    </location>
    <ligand>
        <name>GTP</name>
        <dbReference type="ChEBI" id="CHEBI:37565"/>
    </ligand>
</feature>
<feature type="binding site" evidence="1">
    <location>
        <position position="33"/>
    </location>
    <ligand>
        <name>GDP</name>
        <dbReference type="ChEBI" id="CHEBI:58189"/>
    </ligand>
</feature>
<feature type="binding site" evidence="1">
    <location>
        <position position="33"/>
    </location>
    <ligand>
        <name>GTP</name>
        <dbReference type="ChEBI" id="CHEBI:37565"/>
    </ligand>
</feature>
<feature type="binding site" evidence="1">
    <location>
        <position position="34"/>
    </location>
    <ligand>
        <name>GDP</name>
        <dbReference type="ChEBI" id="CHEBI:58189"/>
    </ligand>
</feature>
<feature type="binding site" evidence="1">
    <location>
        <position position="34"/>
    </location>
    <ligand>
        <name>GTP</name>
        <dbReference type="ChEBI" id="CHEBI:37565"/>
    </ligand>
</feature>
<feature type="binding site" evidence="1">
    <location>
        <position position="95"/>
    </location>
    <ligand>
        <name>GDP</name>
        <dbReference type="ChEBI" id="CHEBI:58189"/>
    </ligand>
</feature>
<feature type="binding site" evidence="1">
    <location>
        <position position="95"/>
    </location>
    <ligand>
        <name>GTP</name>
        <dbReference type="ChEBI" id="CHEBI:37565"/>
    </ligand>
</feature>
<feature type="binding site" evidence="1">
    <location>
        <position position="99"/>
    </location>
    <ligand>
        <name>GDP</name>
        <dbReference type="ChEBI" id="CHEBI:58189"/>
    </ligand>
</feature>
<feature type="binding site" evidence="1">
    <location>
        <position position="99"/>
    </location>
    <ligand>
        <name>GTP</name>
        <dbReference type="ChEBI" id="CHEBI:37565"/>
    </ligand>
</feature>
<feature type="binding site" evidence="1">
    <location>
        <position position="100"/>
    </location>
    <ligand>
        <name>GTP</name>
        <dbReference type="ChEBI" id="CHEBI:37565"/>
    </ligand>
</feature>
<feature type="binding site" evidence="1">
    <location>
        <position position="338"/>
    </location>
    <ligand>
        <name>GDP</name>
        <dbReference type="ChEBI" id="CHEBI:58189"/>
    </ligand>
</feature>
<feature type="binding site" evidence="1">
    <location>
        <position position="338"/>
    </location>
    <ligand>
        <name>GTP</name>
        <dbReference type="ChEBI" id="CHEBI:37565"/>
    </ligand>
</feature>
<feature type="binding site" evidence="1">
    <location>
        <position position="340"/>
    </location>
    <ligand>
        <name>GDP</name>
        <dbReference type="ChEBI" id="CHEBI:58189"/>
    </ligand>
</feature>
<feature type="binding site" evidence="1">
    <location>
        <position position="340"/>
    </location>
    <ligand>
        <name>GTP</name>
        <dbReference type="ChEBI" id="CHEBI:37565"/>
    </ligand>
</feature>
<feature type="binding site" evidence="1">
    <location>
        <position position="341"/>
    </location>
    <ligand>
        <name>GDP</name>
        <dbReference type="ChEBI" id="CHEBI:58189"/>
    </ligand>
</feature>
<feature type="binding site" evidence="1">
    <location>
        <position position="341"/>
    </location>
    <ligand>
        <name>GTP</name>
        <dbReference type="ChEBI" id="CHEBI:37565"/>
    </ligand>
</feature>
<feature type="binding site" evidence="1">
    <location>
        <position position="380"/>
    </location>
    <ligand>
        <name>GDP</name>
        <dbReference type="ChEBI" id="CHEBI:58189"/>
    </ligand>
</feature>
<feature type="binding site" evidence="1">
    <location>
        <position position="380"/>
    </location>
    <ligand>
        <name>GTP</name>
        <dbReference type="ChEBI" id="CHEBI:37565"/>
    </ligand>
</feature>
<feature type="modified residue" description="N6-acetyllysine" evidence="2">
    <location>
        <position position="249"/>
    </location>
</feature>
<name>YCJX_ECOLI</name>
<protein>
    <recommendedName>
        <fullName evidence="3">Ras-like GTPase YcjX</fullName>
        <ecNumber evidence="1">3.6.5.2</ecNumber>
    </recommendedName>
    <alternativeName>
        <fullName evidence="3">Stress protein YcjX</fullName>
    </alternativeName>
</protein>
<sequence length="465" mass="52609">MKRLKNELNALVNRGVDRHLRLAVTGLSRSGKTAFITAMVNQLLNIHAGARLPLLSAVREERLLGVKRIPQRDFGIPRFTYDEGLAQLYGDPPAWPTPTRGVSEIRLALRFKSNDSLLRHFKDTSTLYLEIVDYPGEWLLDLPMLAQDYLSWSRQMTGLLNGQRGEWSAKWRMMSEGLDPLAPADENRLADIAAAWTDYLHHCKEQGLHFIQPGRFVLPGDMAGAPALQFFPWPDVDTWGESKLAQADKHTNAGMLRERFNYYCEKVVKGFYKNHFLRFDRQIVLVDCLQPLNSGPQAFNDMRLALTQLMQSFHYGQRTLFRRLFSPVIDKLLFAATKADHVTIDQHANMVSLLQQLIQDAWQNAAFEGISMDCLGLASVQATTSGIIDVNGEKIPALRGNRLSDGAPLTVYPGEVPARLPGQAFWDKQGFQFEAFRPQVMDVDKPLPHIRLDAALEFLIGDKLR</sequence>
<comment type="function">
    <text evidence="1">Binds GTP and GDP. Has intrinsic GTPase activity. Does not hydrolyze ATP. May act as a transducer of stress responses.</text>
</comment>
<comment type="catalytic activity">
    <reaction evidence="1">
        <text>GTP + H2O = GDP + phosphate + H(+)</text>
        <dbReference type="Rhea" id="RHEA:19669"/>
        <dbReference type="ChEBI" id="CHEBI:15377"/>
        <dbReference type="ChEBI" id="CHEBI:15378"/>
        <dbReference type="ChEBI" id="CHEBI:37565"/>
        <dbReference type="ChEBI" id="CHEBI:43474"/>
        <dbReference type="ChEBI" id="CHEBI:58189"/>
        <dbReference type="EC" id="3.6.5.2"/>
    </reaction>
</comment>
<comment type="cofactor">
    <cofactor evidence="1">
        <name>Mg(2+)</name>
        <dbReference type="ChEBI" id="CHEBI:18420"/>
    </cofactor>
</comment>
<comment type="activity regulation">
    <text evidence="1">Alternates between an inactive form bound to GDP and an active form bound to GTP. Likely activated by a guanine nucleotide-exchange factor (GEF).</text>
</comment>
<comment type="subunit">
    <text evidence="1">Monomer in solution.</text>
</comment>
<comment type="similarity">
    <text evidence="3">To H.influenzae HI_1637.</text>
</comment>
<accession>P76046</accession>
<accession>P77411</accession>
<gene>
    <name type="primary">ycjX</name>
    <name type="ordered locus">b1321</name>
    <name type="ordered locus">JW1314</name>
</gene>
<dbReference type="EC" id="3.6.5.2" evidence="1"/>
<dbReference type="EMBL" id="U00096">
    <property type="protein sequence ID" value="AAC74403.1"/>
    <property type="molecule type" value="Genomic_DNA"/>
</dbReference>
<dbReference type="EMBL" id="AP009048">
    <property type="protein sequence ID" value="BAA14902.2"/>
    <property type="molecule type" value="Genomic_DNA"/>
</dbReference>
<dbReference type="PIR" id="D64881">
    <property type="entry name" value="D64881"/>
</dbReference>
<dbReference type="RefSeq" id="NP_415837.1">
    <property type="nucleotide sequence ID" value="NC_000913.3"/>
</dbReference>
<dbReference type="RefSeq" id="WP_000825775.1">
    <property type="nucleotide sequence ID" value="NZ_SSZK01000012.1"/>
</dbReference>
<dbReference type="SMR" id="P76046"/>
<dbReference type="BioGRID" id="4260148">
    <property type="interactions" value="13"/>
</dbReference>
<dbReference type="DIP" id="DIP-11615N"/>
<dbReference type="FunCoup" id="P76046">
    <property type="interactions" value="30"/>
</dbReference>
<dbReference type="IntAct" id="P76046">
    <property type="interactions" value="3"/>
</dbReference>
<dbReference type="STRING" id="511145.b1321"/>
<dbReference type="iPTMnet" id="P76046"/>
<dbReference type="jPOST" id="P76046"/>
<dbReference type="PaxDb" id="511145-b1321"/>
<dbReference type="EnsemblBacteria" id="AAC74403">
    <property type="protein sequence ID" value="AAC74403"/>
    <property type="gene ID" value="b1321"/>
</dbReference>
<dbReference type="GeneID" id="945872"/>
<dbReference type="KEGG" id="ecj:JW1314"/>
<dbReference type="KEGG" id="eco:b1321"/>
<dbReference type="KEGG" id="ecoc:C3026_07735"/>
<dbReference type="PATRIC" id="fig|511145.12.peg.1378"/>
<dbReference type="EchoBASE" id="EB3680"/>
<dbReference type="eggNOG" id="COG3106">
    <property type="taxonomic scope" value="Bacteria"/>
</dbReference>
<dbReference type="HOGENOM" id="CLU_043657_0_0_6"/>
<dbReference type="InParanoid" id="P76046"/>
<dbReference type="OMA" id="FDYPGEW"/>
<dbReference type="OrthoDB" id="9777645at2"/>
<dbReference type="PhylomeDB" id="P76046"/>
<dbReference type="BioCyc" id="EcoCyc:G6659-MONOMER"/>
<dbReference type="PRO" id="PR:P76046"/>
<dbReference type="Proteomes" id="UP000000625">
    <property type="component" value="Chromosome"/>
</dbReference>
<dbReference type="GO" id="GO:0019003">
    <property type="term" value="F:GDP binding"/>
    <property type="evidence" value="ECO:0000250"/>
    <property type="project" value="UniProtKB"/>
</dbReference>
<dbReference type="GO" id="GO:0005525">
    <property type="term" value="F:GTP binding"/>
    <property type="evidence" value="ECO:0000250"/>
    <property type="project" value="UniProtKB"/>
</dbReference>
<dbReference type="GO" id="GO:0003924">
    <property type="term" value="F:GTPase activity"/>
    <property type="evidence" value="ECO:0000250"/>
    <property type="project" value="UniProtKB"/>
</dbReference>
<dbReference type="InterPro" id="IPR007413">
    <property type="entry name" value="YcjX-like"/>
</dbReference>
<dbReference type="PANTHER" id="PTHR38605:SF1">
    <property type="entry name" value="ATPASE"/>
    <property type="match status" value="1"/>
</dbReference>
<dbReference type="PANTHER" id="PTHR38605">
    <property type="entry name" value="ATPASE-RELATED"/>
    <property type="match status" value="1"/>
</dbReference>
<dbReference type="Pfam" id="PF04317">
    <property type="entry name" value="DUF463"/>
    <property type="match status" value="1"/>
</dbReference>
<dbReference type="PIRSF" id="PIRSF019381">
    <property type="entry name" value="YcjX"/>
    <property type="match status" value="1"/>
</dbReference>
<organism>
    <name type="scientific">Escherichia coli (strain K12)</name>
    <dbReference type="NCBI Taxonomy" id="83333"/>
    <lineage>
        <taxon>Bacteria</taxon>
        <taxon>Pseudomonadati</taxon>
        <taxon>Pseudomonadota</taxon>
        <taxon>Gammaproteobacteria</taxon>
        <taxon>Enterobacterales</taxon>
        <taxon>Enterobacteriaceae</taxon>
        <taxon>Escherichia</taxon>
    </lineage>
</organism>